<proteinExistence type="inferred from homology"/>
<gene>
    <name evidence="1" type="primary">adk</name>
</gene>
<feature type="chain" id="PRO_0000158811" description="Adenylate kinase">
    <location>
        <begin position="1" status="less than"/>
        <end position="174" status="greater than"/>
    </location>
</feature>
<feature type="region of interest" description="NMP" evidence="1">
    <location>
        <begin position="12"/>
        <end position="41"/>
    </location>
</feature>
<feature type="region of interest" description="LID" evidence="1">
    <location>
        <begin position="104"/>
        <end position="141"/>
    </location>
</feature>
<feature type="binding site" evidence="1">
    <location>
        <position position="13"/>
    </location>
    <ligand>
        <name>AMP</name>
        <dbReference type="ChEBI" id="CHEBI:456215"/>
    </ligand>
</feature>
<feature type="binding site" evidence="1">
    <location>
        <position position="18"/>
    </location>
    <ligand>
        <name>AMP</name>
        <dbReference type="ChEBI" id="CHEBI:456215"/>
    </ligand>
</feature>
<feature type="binding site" evidence="1">
    <location>
        <begin position="39"/>
        <end position="41"/>
    </location>
    <ligand>
        <name>AMP</name>
        <dbReference type="ChEBI" id="CHEBI:456215"/>
    </ligand>
</feature>
<feature type="binding site" evidence="1">
    <location>
        <begin position="67"/>
        <end position="70"/>
    </location>
    <ligand>
        <name>AMP</name>
        <dbReference type="ChEBI" id="CHEBI:456215"/>
    </ligand>
</feature>
<feature type="binding site" evidence="1">
    <location>
        <position position="74"/>
    </location>
    <ligand>
        <name>AMP</name>
        <dbReference type="ChEBI" id="CHEBI:456215"/>
    </ligand>
</feature>
<feature type="binding site" evidence="1">
    <location>
        <position position="105"/>
    </location>
    <ligand>
        <name>ATP</name>
        <dbReference type="ChEBI" id="CHEBI:30616"/>
    </ligand>
</feature>
<feature type="binding site" evidence="1">
    <location>
        <begin position="114"/>
        <end position="115"/>
    </location>
    <ligand>
        <name>ATP</name>
        <dbReference type="ChEBI" id="CHEBI:30616"/>
    </ligand>
</feature>
<feature type="binding site" evidence="1">
    <location>
        <position position="138"/>
    </location>
    <ligand>
        <name>AMP</name>
        <dbReference type="ChEBI" id="CHEBI:456215"/>
    </ligand>
</feature>
<feature type="binding site" evidence="1">
    <location>
        <position position="149"/>
    </location>
    <ligand>
        <name>AMP</name>
        <dbReference type="ChEBI" id="CHEBI:456215"/>
    </ligand>
</feature>
<feature type="non-terminal residue">
    <location>
        <position position="1"/>
    </location>
</feature>
<feature type="non-terminal residue">
    <location>
        <position position="174"/>
    </location>
</feature>
<evidence type="ECO:0000255" key="1">
    <source>
        <dbReference type="HAMAP-Rule" id="MF_00235"/>
    </source>
</evidence>
<organism>
    <name type="scientific">Neisseria lactamica</name>
    <dbReference type="NCBI Taxonomy" id="486"/>
    <lineage>
        <taxon>Bacteria</taxon>
        <taxon>Pseudomonadati</taxon>
        <taxon>Pseudomonadota</taxon>
        <taxon>Betaproteobacteria</taxon>
        <taxon>Neisseriales</taxon>
        <taxon>Neisseriaceae</taxon>
        <taxon>Neisseria</taxon>
    </lineage>
</organism>
<dbReference type="EC" id="2.7.4.3" evidence="1"/>
<dbReference type="EMBL" id="U57709">
    <property type="protein sequence ID" value="AAB49187.1"/>
    <property type="molecule type" value="Genomic_DNA"/>
</dbReference>
<dbReference type="SMR" id="Q59615"/>
<dbReference type="STRING" id="486.B2G52_06160"/>
<dbReference type="UniPathway" id="UPA00588">
    <property type="reaction ID" value="UER00649"/>
</dbReference>
<dbReference type="GO" id="GO:0005737">
    <property type="term" value="C:cytoplasm"/>
    <property type="evidence" value="ECO:0007669"/>
    <property type="project" value="UniProtKB-SubCell"/>
</dbReference>
<dbReference type="GO" id="GO:0004017">
    <property type="term" value="F:adenylate kinase activity"/>
    <property type="evidence" value="ECO:0007669"/>
    <property type="project" value="UniProtKB-EC"/>
</dbReference>
<dbReference type="GO" id="GO:0005524">
    <property type="term" value="F:ATP binding"/>
    <property type="evidence" value="ECO:0007669"/>
    <property type="project" value="UniProtKB-KW"/>
</dbReference>
<dbReference type="GO" id="GO:0044209">
    <property type="term" value="P:AMP salvage"/>
    <property type="evidence" value="ECO:0007669"/>
    <property type="project" value="UniProtKB-UniPathway"/>
</dbReference>
<dbReference type="CDD" id="cd01428">
    <property type="entry name" value="ADK"/>
    <property type="match status" value="1"/>
</dbReference>
<dbReference type="FunFam" id="3.40.50.300:FF:000106">
    <property type="entry name" value="Adenylate kinase mitochondrial"/>
    <property type="match status" value="1"/>
</dbReference>
<dbReference type="Gene3D" id="3.40.50.300">
    <property type="entry name" value="P-loop containing nucleotide triphosphate hydrolases"/>
    <property type="match status" value="1"/>
</dbReference>
<dbReference type="HAMAP" id="MF_00235">
    <property type="entry name" value="Adenylate_kinase_Adk"/>
    <property type="match status" value="1"/>
</dbReference>
<dbReference type="InterPro" id="IPR006259">
    <property type="entry name" value="Adenyl_kin_sub"/>
</dbReference>
<dbReference type="InterPro" id="IPR000850">
    <property type="entry name" value="Adenylat/UMP-CMP_kin"/>
</dbReference>
<dbReference type="InterPro" id="IPR033690">
    <property type="entry name" value="Adenylat_kinase_CS"/>
</dbReference>
<dbReference type="InterPro" id="IPR007862">
    <property type="entry name" value="Adenylate_kinase_lid-dom"/>
</dbReference>
<dbReference type="InterPro" id="IPR027417">
    <property type="entry name" value="P-loop_NTPase"/>
</dbReference>
<dbReference type="NCBIfam" id="TIGR01351">
    <property type="entry name" value="adk"/>
    <property type="match status" value="1"/>
</dbReference>
<dbReference type="NCBIfam" id="NF001379">
    <property type="entry name" value="PRK00279.1-1"/>
    <property type="match status" value="1"/>
</dbReference>
<dbReference type="PANTHER" id="PTHR23359">
    <property type="entry name" value="NUCLEOTIDE KINASE"/>
    <property type="match status" value="1"/>
</dbReference>
<dbReference type="Pfam" id="PF00406">
    <property type="entry name" value="ADK"/>
    <property type="match status" value="1"/>
</dbReference>
<dbReference type="Pfam" id="PF05191">
    <property type="entry name" value="ADK_lid"/>
    <property type="match status" value="1"/>
</dbReference>
<dbReference type="PRINTS" id="PR00094">
    <property type="entry name" value="ADENYLTKNASE"/>
</dbReference>
<dbReference type="SUPFAM" id="SSF52540">
    <property type="entry name" value="P-loop containing nucleoside triphosphate hydrolases"/>
    <property type="match status" value="1"/>
</dbReference>
<dbReference type="PROSITE" id="PS00113">
    <property type="entry name" value="ADENYLATE_KINASE"/>
    <property type="match status" value="1"/>
</dbReference>
<comment type="function">
    <text evidence="1">Catalyzes the reversible transfer of the terminal phosphate group between ATP and AMP. Plays an important role in cellular energy homeostasis and in adenine nucleotide metabolism.</text>
</comment>
<comment type="catalytic activity">
    <reaction evidence="1">
        <text>AMP + ATP = 2 ADP</text>
        <dbReference type="Rhea" id="RHEA:12973"/>
        <dbReference type="ChEBI" id="CHEBI:30616"/>
        <dbReference type="ChEBI" id="CHEBI:456215"/>
        <dbReference type="ChEBI" id="CHEBI:456216"/>
        <dbReference type="EC" id="2.7.4.3"/>
    </reaction>
</comment>
<comment type="pathway">
    <text evidence="1">Purine metabolism; AMP biosynthesis via salvage pathway; AMP from ADP: step 1/1.</text>
</comment>
<comment type="subunit">
    <text evidence="1">Monomer.</text>
</comment>
<comment type="subcellular location">
    <subcellularLocation>
        <location evidence="1">Cytoplasm</location>
    </subcellularLocation>
</comment>
<comment type="domain">
    <text evidence="1">Consists of three domains, a large central CORE domain and two small peripheral domains, NMPbind and LID, which undergo movements during catalysis. The LID domain closes over the site of phosphoryl transfer upon ATP binding. Assembling and dissambling the active center during each catalytic cycle provides an effective means to prevent ATP hydrolysis.</text>
</comment>
<comment type="similarity">
    <text evidence="1">Belongs to the adenylate kinase family.</text>
</comment>
<accession>Q59615</accession>
<keyword id="KW-0067">ATP-binding</keyword>
<keyword id="KW-0963">Cytoplasm</keyword>
<keyword id="KW-0418">Kinase</keyword>
<keyword id="KW-0545">Nucleotide biosynthesis</keyword>
<keyword id="KW-0547">Nucleotide-binding</keyword>
<keyword id="KW-0808">Transferase</keyword>
<reference key="1">
    <citation type="journal article" date="1996" name="J. Mol. Evol.">
        <title>A comparison of the nucleotide sequences of the adk and recA genes of pathogenic and commensal Neisseria species: evidence for extensive interspecies recombination within adk.</title>
        <authorList>
            <person name="Feil E."/>
            <person name="Zhou J."/>
            <person name="Maynard Smith J."/>
            <person name="Spratt B.G."/>
        </authorList>
    </citation>
    <scope>NUCLEOTIDE SEQUENCE [GENOMIC DNA]</scope>
    <source>
        <strain>ATCC 23970 / DSM 4691 / CCUG 5853 / CIP 72.17 / NCTC 10617 / NCDC A7515</strain>
    </source>
</reference>
<sequence>FITAAFGIPQISTGDMLRAAIKAGTPLGLEAKKIIDEGGLVRDDIIIGMVKERIAQDDCKNGFLFDGFPRTLAQAEAMVEAGVDLDAVVEIDVPDSVIVDRMSGRRVHLASGRTYHVTYNPPKVEGKDDVTGEDLIQRDDDKEETVKKRLAVYHEQTEVLVDFYSKLEGEHAPK</sequence>
<name>KAD_NEILA</name>
<protein>
    <recommendedName>
        <fullName evidence="1">Adenylate kinase</fullName>
        <shortName evidence="1">AK</shortName>
        <ecNumber evidence="1">2.7.4.3</ecNumber>
    </recommendedName>
    <alternativeName>
        <fullName evidence="1">ATP-AMP transphosphorylase</fullName>
    </alternativeName>
    <alternativeName>
        <fullName evidence="1">ATP:AMP phosphotransferase</fullName>
    </alternativeName>
    <alternativeName>
        <fullName evidence="1">Adenylate monophosphate kinase</fullName>
    </alternativeName>
</protein>